<dbReference type="EC" id="3.1.26.4" evidence="1"/>
<dbReference type="EMBL" id="CP000127">
    <property type="protein sequence ID" value="ABA58483.1"/>
    <property type="molecule type" value="Genomic_DNA"/>
</dbReference>
<dbReference type="RefSeq" id="WP_002809104.1">
    <property type="nucleotide sequence ID" value="NC_007484.1"/>
</dbReference>
<dbReference type="SMR" id="Q3J9L3"/>
<dbReference type="FunCoup" id="Q3J9L3">
    <property type="interactions" value="353"/>
</dbReference>
<dbReference type="STRING" id="323261.Noc_2022"/>
<dbReference type="KEGG" id="noc:Noc_2022"/>
<dbReference type="eggNOG" id="COG0164">
    <property type="taxonomic scope" value="Bacteria"/>
</dbReference>
<dbReference type="HOGENOM" id="CLU_036532_3_2_6"/>
<dbReference type="InParanoid" id="Q3J9L3"/>
<dbReference type="Proteomes" id="UP000006838">
    <property type="component" value="Chromosome"/>
</dbReference>
<dbReference type="GO" id="GO:0005737">
    <property type="term" value="C:cytoplasm"/>
    <property type="evidence" value="ECO:0007669"/>
    <property type="project" value="UniProtKB-SubCell"/>
</dbReference>
<dbReference type="GO" id="GO:0032299">
    <property type="term" value="C:ribonuclease H2 complex"/>
    <property type="evidence" value="ECO:0007669"/>
    <property type="project" value="TreeGrafter"/>
</dbReference>
<dbReference type="GO" id="GO:0030145">
    <property type="term" value="F:manganese ion binding"/>
    <property type="evidence" value="ECO:0007669"/>
    <property type="project" value="UniProtKB-UniRule"/>
</dbReference>
<dbReference type="GO" id="GO:0003723">
    <property type="term" value="F:RNA binding"/>
    <property type="evidence" value="ECO:0007669"/>
    <property type="project" value="InterPro"/>
</dbReference>
<dbReference type="GO" id="GO:0004523">
    <property type="term" value="F:RNA-DNA hybrid ribonuclease activity"/>
    <property type="evidence" value="ECO:0007669"/>
    <property type="project" value="UniProtKB-UniRule"/>
</dbReference>
<dbReference type="GO" id="GO:0043137">
    <property type="term" value="P:DNA replication, removal of RNA primer"/>
    <property type="evidence" value="ECO:0007669"/>
    <property type="project" value="TreeGrafter"/>
</dbReference>
<dbReference type="GO" id="GO:0006298">
    <property type="term" value="P:mismatch repair"/>
    <property type="evidence" value="ECO:0007669"/>
    <property type="project" value="TreeGrafter"/>
</dbReference>
<dbReference type="CDD" id="cd07182">
    <property type="entry name" value="RNase_HII_bacteria_HII_like"/>
    <property type="match status" value="1"/>
</dbReference>
<dbReference type="FunFam" id="3.30.420.10:FF:000006">
    <property type="entry name" value="Ribonuclease HII"/>
    <property type="match status" value="1"/>
</dbReference>
<dbReference type="Gene3D" id="3.30.420.10">
    <property type="entry name" value="Ribonuclease H-like superfamily/Ribonuclease H"/>
    <property type="match status" value="1"/>
</dbReference>
<dbReference type="HAMAP" id="MF_00052_B">
    <property type="entry name" value="RNase_HII_B"/>
    <property type="match status" value="1"/>
</dbReference>
<dbReference type="InterPro" id="IPR022898">
    <property type="entry name" value="RNase_HII"/>
</dbReference>
<dbReference type="InterPro" id="IPR001352">
    <property type="entry name" value="RNase_HII/HIII"/>
</dbReference>
<dbReference type="InterPro" id="IPR024567">
    <property type="entry name" value="RNase_HII/HIII_dom"/>
</dbReference>
<dbReference type="InterPro" id="IPR012337">
    <property type="entry name" value="RNaseH-like_sf"/>
</dbReference>
<dbReference type="InterPro" id="IPR036397">
    <property type="entry name" value="RNaseH_sf"/>
</dbReference>
<dbReference type="NCBIfam" id="NF000594">
    <property type="entry name" value="PRK00015.1-1"/>
    <property type="match status" value="1"/>
</dbReference>
<dbReference type="NCBIfam" id="NF000595">
    <property type="entry name" value="PRK00015.1-3"/>
    <property type="match status" value="1"/>
</dbReference>
<dbReference type="NCBIfam" id="NF000596">
    <property type="entry name" value="PRK00015.1-4"/>
    <property type="match status" value="1"/>
</dbReference>
<dbReference type="PANTHER" id="PTHR10954">
    <property type="entry name" value="RIBONUCLEASE H2 SUBUNIT A"/>
    <property type="match status" value="1"/>
</dbReference>
<dbReference type="PANTHER" id="PTHR10954:SF18">
    <property type="entry name" value="RIBONUCLEASE HII"/>
    <property type="match status" value="1"/>
</dbReference>
<dbReference type="Pfam" id="PF01351">
    <property type="entry name" value="RNase_HII"/>
    <property type="match status" value="1"/>
</dbReference>
<dbReference type="SUPFAM" id="SSF53098">
    <property type="entry name" value="Ribonuclease H-like"/>
    <property type="match status" value="1"/>
</dbReference>
<dbReference type="PROSITE" id="PS51975">
    <property type="entry name" value="RNASE_H_2"/>
    <property type="match status" value="1"/>
</dbReference>
<gene>
    <name evidence="1" type="primary">rnhB</name>
    <name type="ordered locus">Noc_2022</name>
</gene>
<reference key="1">
    <citation type="journal article" date="2006" name="Appl. Environ. Microbiol.">
        <title>Complete genome sequence of the marine, chemolithoautotrophic, ammonia-oxidizing bacterium Nitrosococcus oceani ATCC 19707.</title>
        <authorList>
            <person name="Klotz M.G."/>
            <person name="Arp D.J."/>
            <person name="Chain P.S.G."/>
            <person name="El-Sheikh A.F."/>
            <person name="Hauser L.J."/>
            <person name="Hommes N.G."/>
            <person name="Larimer F.W."/>
            <person name="Malfatti S.A."/>
            <person name="Norton J.M."/>
            <person name="Poret-Peterson A.T."/>
            <person name="Vergez L.M."/>
            <person name="Ward B.B."/>
        </authorList>
    </citation>
    <scope>NUCLEOTIDE SEQUENCE [LARGE SCALE GENOMIC DNA]</scope>
    <source>
        <strain>ATCC 19707 / BCRC 17464 / JCM 30415 / NCIMB 11848 / C-107</strain>
    </source>
</reference>
<feature type="chain" id="PRO_0000235741" description="Ribonuclease HII">
    <location>
        <begin position="1"/>
        <end position="201"/>
    </location>
</feature>
<feature type="domain" description="RNase H type-2" evidence="2">
    <location>
        <begin position="15"/>
        <end position="201"/>
    </location>
</feature>
<feature type="binding site" evidence="1">
    <location>
        <position position="21"/>
    </location>
    <ligand>
        <name>a divalent metal cation</name>
        <dbReference type="ChEBI" id="CHEBI:60240"/>
    </ligand>
</feature>
<feature type="binding site" evidence="1">
    <location>
        <position position="22"/>
    </location>
    <ligand>
        <name>a divalent metal cation</name>
        <dbReference type="ChEBI" id="CHEBI:60240"/>
    </ligand>
</feature>
<feature type="binding site" evidence="1">
    <location>
        <position position="113"/>
    </location>
    <ligand>
        <name>a divalent metal cation</name>
        <dbReference type="ChEBI" id="CHEBI:60240"/>
    </ligand>
</feature>
<protein>
    <recommendedName>
        <fullName evidence="1">Ribonuclease HII</fullName>
        <shortName evidence="1">RNase HII</shortName>
        <ecNumber evidence="1">3.1.26.4</ecNumber>
    </recommendedName>
</protein>
<keyword id="KW-0963">Cytoplasm</keyword>
<keyword id="KW-0255">Endonuclease</keyword>
<keyword id="KW-0378">Hydrolase</keyword>
<keyword id="KW-0464">Manganese</keyword>
<keyword id="KW-0479">Metal-binding</keyword>
<keyword id="KW-0540">Nuclease</keyword>
<keyword id="KW-1185">Reference proteome</keyword>
<comment type="function">
    <text evidence="1">Endonuclease that specifically degrades the RNA of RNA-DNA hybrids.</text>
</comment>
<comment type="catalytic activity">
    <reaction evidence="1">
        <text>Endonucleolytic cleavage to 5'-phosphomonoester.</text>
        <dbReference type="EC" id="3.1.26.4"/>
    </reaction>
</comment>
<comment type="cofactor">
    <cofactor evidence="1">
        <name>Mn(2+)</name>
        <dbReference type="ChEBI" id="CHEBI:29035"/>
    </cofactor>
    <cofactor evidence="1">
        <name>Mg(2+)</name>
        <dbReference type="ChEBI" id="CHEBI:18420"/>
    </cofactor>
    <text evidence="1">Manganese or magnesium. Binds 1 divalent metal ion per monomer in the absence of substrate. May bind a second metal ion after substrate binding.</text>
</comment>
<comment type="subcellular location">
    <subcellularLocation>
        <location evidence="1">Cytoplasm</location>
    </subcellularLocation>
</comment>
<comment type="similarity">
    <text evidence="1">Belongs to the RNase HII family.</text>
</comment>
<name>RNH2_NITOC</name>
<accession>Q3J9L3</accession>
<organism>
    <name type="scientific">Nitrosococcus oceani (strain ATCC 19707 / BCRC 17464 / JCM 30415 / NCIMB 11848 / C-107)</name>
    <dbReference type="NCBI Taxonomy" id="323261"/>
    <lineage>
        <taxon>Bacteria</taxon>
        <taxon>Pseudomonadati</taxon>
        <taxon>Pseudomonadota</taxon>
        <taxon>Gammaproteobacteria</taxon>
        <taxon>Chromatiales</taxon>
        <taxon>Chromatiaceae</taxon>
        <taxon>Nitrosococcus</taxon>
    </lineage>
</organism>
<evidence type="ECO:0000255" key="1">
    <source>
        <dbReference type="HAMAP-Rule" id="MF_00052"/>
    </source>
</evidence>
<evidence type="ECO:0000255" key="2">
    <source>
        <dbReference type="PROSITE-ProRule" id="PRU01319"/>
    </source>
</evidence>
<sequence length="201" mass="21137">MLLDGGILSTSVLGQRVAGVDEVGRGPLAGPVIAGAVILDPECPISGVKDSKQLTAPARERLAALIQAQAVAWALGRAEAAEIDQFNILQASLLAMERAISALSVVPDLVLVDGKHCPPTVCPVRAIVKGDQQIMAIGAASIVAKVARDAEMIAFEESYPGYGFGIHKGYPTRAHLAALKALGPCSIHRRSFRPVRRFLEA</sequence>
<proteinExistence type="inferred from homology"/>